<reference key="1">
    <citation type="journal article" date="2004" name="Proc. Natl. Acad. Sci. U.S.A.">
        <title>The diploid genome sequence of Candida albicans.</title>
        <authorList>
            <person name="Jones T."/>
            <person name="Federspiel N.A."/>
            <person name="Chibana H."/>
            <person name="Dungan J."/>
            <person name="Kalman S."/>
            <person name="Magee B.B."/>
            <person name="Newport G."/>
            <person name="Thorstenson Y.R."/>
            <person name="Agabian N."/>
            <person name="Magee P.T."/>
            <person name="Davis R.W."/>
            <person name="Scherer S."/>
        </authorList>
    </citation>
    <scope>NUCLEOTIDE SEQUENCE [LARGE SCALE GENOMIC DNA]</scope>
    <source>
        <strain>SC5314 / ATCC MYA-2876</strain>
    </source>
</reference>
<reference key="2">
    <citation type="journal article" date="2007" name="Genome Biol.">
        <title>Assembly of the Candida albicans genome into sixteen supercontigs aligned on the eight chromosomes.</title>
        <authorList>
            <person name="van het Hoog M."/>
            <person name="Rast T.J."/>
            <person name="Martchenko M."/>
            <person name="Grindle S."/>
            <person name="Dignard D."/>
            <person name="Hogues H."/>
            <person name="Cuomo C."/>
            <person name="Berriman M."/>
            <person name="Scherer S."/>
            <person name="Magee B.B."/>
            <person name="Whiteway M."/>
            <person name="Chibana H."/>
            <person name="Nantel A."/>
            <person name="Magee P.T."/>
        </authorList>
    </citation>
    <scope>GENOME REANNOTATION</scope>
    <source>
        <strain>SC5314 / ATCC MYA-2876</strain>
    </source>
</reference>
<reference key="3">
    <citation type="journal article" date="2013" name="Genome Biol.">
        <title>Assembly of a phased diploid Candida albicans genome facilitates allele-specific measurements and provides a simple model for repeat and indel structure.</title>
        <authorList>
            <person name="Muzzey D."/>
            <person name="Schwartz K."/>
            <person name="Weissman J.S."/>
            <person name="Sherlock G."/>
        </authorList>
    </citation>
    <scope>NUCLEOTIDE SEQUENCE [LARGE SCALE GENOMIC DNA]</scope>
    <scope>GENOME REANNOTATION</scope>
    <source>
        <strain>SC5314 / ATCC MYA-2876</strain>
    </source>
</reference>
<comment type="function">
    <text evidence="2">Component of the NOP7 complex, which is required for maturation of the 25S and 5.8S ribosomal RNAs and formation of the 60S ribosome.</text>
</comment>
<comment type="subunit">
    <text evidence="2">Component of the NOP7 complex, composed of ERB1, NOP7 and YTM1. The complex is held together by ERB1, which interacts with NOP7 via its N-terminal domain and with YTM1 via a high-affinity interaction between the seven-bladed beta-propeller domains of the 2 proteins. The NOP7 complex associates with the 66S pre-ribosome. Interacts (via UBL domain) with MDN1 (via VWFA/MIDAS domain).</text>
</comment>
<comment type="subcellular location">
    <subcellularLocation>
        <location evidence="2">Nucleus</location>
        <location evidence="2">Nucleolus</location>
    </subcellularLocation>
    <subcellularLocation>
        <location evidence="2">Nucleus</location>
        <location evidence="2">Nucleoplasm</location>
    </subcellularLocation>
</comment>
<comment type="similarity">
    <text evidence="2">Belongs to the WD repeat WDR12/YTM1 family.</text>
</comment>
<dbReference type="EMBL" id="CP017623">
    <property type="protein sequence ID" value="AOW26584.1"/>
    <property type="molecule type" value="Genomic_DNA"/>
</dbReference>
<dbReference type="RefSeq" id="XP_723501.1">
    <property type="nucleotide sequence ID" value="XM_718408.2"/>
</dbReference>
<dbReference type="SMR" id="Q5APF0"/>
<dbReference type="BioGRID" id="1217859">
    <property type="interactions" value="1"/>
</dbReference>
<dbReference type="FunCoup" id="Q5APF0">
    <property type="interactions" value="970"/>
</dbReference>
<dbReference type="STRING" id="237561.Q5APF0"/>
<dbReference type="EnsemblFungi" id="C1_09510W_A-T">
    <property type="protein sequence ID" value="C1_09510W_A-T-p1"/>
    <property type="gene ID" value="C1_09510W_A"/>
</dbReference>
<dbReference type="GeneID" id="3634765"/>
<dbReference type="KEGG" id="cal:CAALFM_C109510WA"/>
<dbReference type="CGD" id="CAL0000176486">
    <property type="gene designation" value="YTM1"/>
</dbReference>
<dbReference type="VEuPathDB" id="FungiDB:C1_09510W_A"/>
<dbReference type="eggNOG" id="KOG0313">
    <property type="taxonomic scope" value="Eukaryota"/>
</dbReference>
<dbReference type="HOGENOM" id="CLU_000288_57_0_1"/>
<dbReference type="InParanoid" id="Q5APF0"/>
<dbReference type="OrthoDB" id="10251381at2759"/>
<dbReference type="PRO" id="PR:Q5APF0"/>
<dbReference type="Proteomes" id="UP000000559">
    <property type="component" value="Chromosome 1"/>
</dbReference>
<dbReference type="GO" id="GO:0005654">
    <property type="term" value="C:nucleoplasm"/>
    <property type="evidence" value="ECO:0007669"/>
    <property type="project" value="UniProtKB-SubCell"/>
</dbReference>
<dbReference type="GO" id="GO:0070545">
    <property type="term" value="C:PeBoW complex"/>
    <property type="evidence" value="ECO:0000318"/>
    <property type="project" value="GO_Central"/>
</dbReference>
<dbReference type="GO" id="GO:0030687">
    <property type="term" value="C:preribosome, large subunit precursor"/>
    <property type="evidence" value="ECO:0000318"/>
    <property type="project" value="GO_Central"/>
</dbReference>
<dbReference type="GO" id="GO:0043021">
    <property type="term" value="F:ribonucleoprotein complex binding"/>
    <property type="evidence" value="ECO:0007669"/>
    <property type="project" value="UniProtKB-UniRule"/>
</dbReference>
<dbReference type="GO" id="GO:0009267">
    <property type="term" value="P:cellular response to starvation"/>
    <property type="evidence" value="ECO:0000315"/>
    <property type="project" value="CGD"/>
</dbReference>
<dbReference type="GO" id="GO:0051276">
    <property type="term" value="P:chromosome organization"/>
    <property type="evidence" value="ECO:0007669"/>
    <property type="project" value="EnsemblFungi"/>
</dbReference>
<dbReference type="GO" id="GO:0030447">
    <property type="term" value="P:filamentous growth"/>
    <property type="evidence" value="ECO:0000315"/>
    <property type="project" value="CGD"/>
</dbReference>
<dbReference type="GO" id="GO:0036180">
    <property type="term" value="P:filamentous growth of a population of unicellular organisms in response to biotic stimulus"/>
    <property type="evidence" value="ECO:0000315"/>
    <property type="project" value="CGD"/>
</dbReference>
<dbReference type="GO" id="GO:0036170">
    <property type="term" value="P:filamentous growth of a population of unicellular organisms in response to starvation"/>
    <property type="evidence" value="ECO:0000315"/>
    <property type="project" value="CGD"/>
</dbReference>
<dbReference type="GO" id="GO:0000466">
    <property type="term" value="P:maturation of 5.8S rRNA from tricistronic rRNA transcript (SSU-rRNA, 5.8S rRNA, LSU-rRNA)"/>
    <property type="evidence" value="ECO:0007669"/>
    <property type="project" value="UniProtKB-UniRule"/>
</dbReference>
<dbReference type="GO" id="GO:0000463">
    <property type="term" value="P:maturation of LSU-rRNA from tricistronic rRNA transcript (SSU-rRNA, 5.8S rRNA, LSU-rRNA)"/>
    <property type="evidence" value="ECO:0007669"/>
    <property type="project" value="UniProtKB-UniRule"/>
</dbReference>
<dbReference type="GO" id="GO:0110136">
    <property type="term" value="P:protein-RNA complex remodeling"/>
    <property type="evidence" value="ECO:0007669"/>
    <property type="project" value="EnsemblFungi"/>
</dbReference>
<dbReference type="GO" id="GO:0042273">
    <property type="term" value="P:ribosomal large subunit biogenesis"/>
    <property type="evidence" value="ECO:0000318"/>
    <property type="project" value="GO_Central"/>
</dbReference>
<dbReference type="CDD" id="cd00200">
    <property type="entry name" value="WD40"/>
    <property type="match status" value="1"/>
</dbReference>
<dbReference type="FunFam" id="2.130.10.10:FF:000706">
    <property type="entry name" value="Ribosome biogenesis protein YTM1"/>
    <property type="match status" value="1"/>
</dbReference>
<dbReference type="Gene3D" id="2.130.10.10">
    <property type="entry name" value="YVTN repeat-like/Quinoprotein amine dehydrogenase"/>
    <property type="match status" value="1"/>
</dbReference>
<dbReference type="HAMAP" id="MF_03029">
    <property type="entry name" value="WDR12"/>
    <property type="match status" value="1"/>
</dbReference>
<dbReference type="InterPro" id="IPR020472">
    <property type="entry name" value="G-protein_beta_WD-40_rep"/>
</dbReference>
<dbReference type="InterPro" id="IPR012972">
    <property type="entry name" value="NLE"/>
</dbReference>
<dbReference type="InterPro" id="IPR015943">
    <property type="entry name" value="WD40/YVTN_repeat-like_dom_sf"/>
</dbReference>
<dbReference type="InterPro" id="IPR036322">
    <property type="entry name" value="WD40_repeat_dom_sf"/>
</dbReference>
<dbReference type="InterPro" id="IPR001680">
    <property type="entry name" value="WD40_rpt"/>
</dbReference>
<dbReference type="InterPro" id="IPR028599">
    <property type="entry name" value="WDR12/Ytm1"/>
</dbReference>
<dbReference type="PANTHER" id="PTHR19855:SF11">
    <property type="entry name" value="RIBOSOME BIOGENESIS PROTEIN WDR12"/>
    <property type="match status" value="1"/>
</dbReference>
<dbReference type="PANTHER" id="PTHR19855">
    <property type="entry name" value="WD40 REPEAT PROTEIN 12, 37"/>
    <property type="match status" value="1"/>
</dbReference>
<dbReference type="Pfam" id="PF08154">
    <property type="entry name" value="NLE"/>
    <property type="match status" value="1"/>
</dbReference>
<dbReference type="Pfam" id="PF00400">
    <property type="entry name" value="WD40"/>
    <property type="match status" value="4"/>
</dbReference>
<dbReference type="PRINTS" id="PR00320">
    <property type="entry name" value="GPROTEINBRPT"/>
</dbReference>
<dbReference type="SMART" id="SM00320">
    <property type="entry name" value="WD40"/>
    <property type="match status" value="7"/>
</dbReference>
<dbReference type="SUPFAM" id="SSF50978">
    <property type="entry name" value="WD40 repeat-like"/>
    <property type="match status" value="1"/>
</dbReference>
<dbReference type="PROSITE" id="PS50082">
    <property type="entry name" value="WD_REPEATS_2"/>
    <property type="match status" value="4"/>
</dbReference>
<dbReference type="PROSITE" id="PS50294">
    <property type="entry name" value="WD_REPEATS_REGION"/>
    <property type="match status" value="1"/>
</dbReference>
<gene>
    <name evidence="2" type="primary">YTM1</name>
    <name type="ordered locus">CAALFM_C109510WA</name>
    <name type="ORF">CaO19.12278</name>
    <name type="ORF">CaO19.4815</name>
</gene>
<accession>Q5APF0</accession>
<accession>A0A1D8PEL4</accession>
<keyword id="KW-0539">Nucleus</keyword>
<keyword id="KW-1185">Reference proteome</keyword>
<keyword id="KW-0677">Repeat</keyword>
<keyword id="KW-0690">Ribosome biogenesis</keyword>
<keyword id="KW-0698">rRNA processing</keyword>
<keyword id="KW-0853">WD repeat</keyword>
<protein>
    <recommendedName>
        <fullName evidence="2">Ribosome biogenesis protein YTM1</fullName>
    </recommendedName>
</protein>
<proteinExistence type="inferred from homology"/>
<organism>
    <name type="scientific">Candida albicans (strain SC5314 / ATCC MYA-2876)</name>
    <name type="common">Yeast</name>
    <dbReference type="NCBI Taxonomy" id="237561"/>
    <lineage>
        <taxon>Eukaryota</taxon>
        <taxon>Fungi</taxon>
        <taxon>Dikarya</taxon>
        <taxon>Ascomycota</taxon>
        <taxon>Saccharomycotina</taxon>
        <taxon>Pichiomycetes</taxon>
        <taxon>Debaryomycetaceae</taxon>
        <taxon>Candida/Lodderomyces clade</taxon>
        <taxon>Candida</taxon>
    </lineage>
</organism>
<feature type="chain" id="PRO_0000369581" description="Ribosome biogenesis protein YTM1">
    <location>
        <begin position="1"/>
        <end position="466"/>
    </location>
</feature>
<feature type="repeat" description="WD 1">
    <location>
        <begin position="124"/>
        <end position="163"/>
    </location>
</feature>
<feature type="repeat" description="WD 2">
    <location>
        <begin position="165"/>
        <end position="203"/>
    </location>
</feature>
<feature type="repeat" description="WD 3">
    <location>
        <begin position="219"/>
        <end position="258"/>
    </location>
</feature>
<feature type="repeat" description="WD 4">
    <location>
        <begin position="296"/>
        <end position="336"/>
    </location>
</feature>
<feature type="repeat" description="WD 5">
    <location>
        <begin position="338"/>
        <end position="377"/>
    </location>
</feature>
<feature type="repeat" description="WD 6">
    <location>
        <begin position="384"/>
        <end position="424"/>
    </location>
</feature>
<feature type="repeat" description="WD 7">
    <location>
        <begin position="431"/>
        <end position="466"/>
    </location>
</feature>
<feature type="region of interest" description="Ubiquitin-like (UBL) domain" evidence="2">
    <location>
        <begin position="11"/>
        <end position="99"/>
    </location>
</feature>
<feature type="region of interest" description="Sufficient for interaction with ERB1 and association with 66S pre-ribosomes" evidence="1">
    <location>
        <begin position="109"/>
        <end position="466"/>
    </location>
</feature>
<evidence type="ECO:0000250" key="1"/>
<evidence type="ECO:0000255" key="2">
    <source>
        <dbReference type="HAMAP-Rule" id="MF_03029"/>
    </source>
</evidence>
<sequence length="466" mass="51690">MSSTGENKNQIKIKFFTNEEDESLQVADTPLYVPVTLKRFGLSEVVNHLLGNFKGEDETKAPIPFDFLIDGVLLRTSIEDYLTKNGLSNEAFLTLEYTRAILPPSFLASFNNDDWISSIDSINPTTKIVMSSQLSISQPKILSGSYDGIVRTYNMSGKVEKQYVGHSAPVKAVKWISPTRIVSAGNDRQVRLWKTSYEEIIDEDEEEIEDGKTLALLEGHKAPVVDLAVDTQTNRILSAGYDQNIGFWSTNYKEMTSIQPLEYDSNVVSSSSKKRRKMAVQDATIRRRAPLSLLQGHSEPVEGVIFDAKDSTVGYSVSQDHTIKTWDLVTSRCVDTRTTGYSLLSVLQLPQVNLIASGSSARHINLHDPRVTTTSDQTISKLVGHTNFVVGLTASPHNQNMFASSSHDGTVKVWDVRAEKSLYTITRQDGSTNAKIFDVCWDDRIGIISGGEDKKLQINKGSDIAK</sequence>
<name>YTM1_CANAL</name>